<sequence>MKAEIHPDYHTIKVVMTDGTEYLTRSTWGKEGDTLNLDIDPKSHPAWTGGNAQIMDRGGRVSRFQKKFSGFLKKD</sequence>
<feature type="chain" id="PRO_0000173083" description="Large ribosomal subunit protein bL31">
    <location>
        <begin position="1"/>
        <end position="75"/>
    </location>
</feature>
<gene>
    <name evidence="1" type="primary">rpmE</name>
    <name type="ordered locus">bsl1507</name>
</gene>
<evidence type="ECO:0000255" key="1">
    <source>
        <dbReference type="HAMAP-Rule" id="MF_00501"/>
    </source>
</evidence>
<evidence type="ECO:0000305" key="2"/>
<protein>
    <recommendedName>
        <fullName evidence="1">Large ribosomal subunit protein bL31</fullName>
    </recommendedName>
    <alternativeName>
        <fullName evidence="2">50S ribosomal protein L31</fullName>
    </alternativeName>
</protein>
<proteinExistence type="inferred from homology"/>
<accession>Q89UB0</accession>
<dbReference type="EMBL" id="BA000040">
    <property type="protein sequence ID" value="BAC46772.1"/>
    <property type="molecule type" value="Genomic_DNA"/>
</dbReference>
<dbReference type="RefSeq" id="NP_768147.1">
    <property type="nucleotide sequence ID" value="NC_004463.1"/>
</dbReference>
<dbReference type="RefSeq" id="WP_011084323.1">
    <property type="nucleotide sequence ID" value="NZ_CP011360.1"/>
</dbReference>
<dbReference type="SMR" id="Q89UB0"/>
<dbReference type="FunCoup" id="Q89UB0">
    <property type="interactions" value="536"/>
</dbReference>
<dbReference type="STRING" id="224911.AAV28_04480"/>
<dbReference type="EnsemblBacteria" id="BAC46772">
    <property type="protein sequence ID" value="BAC46772"/>
    <property type="gene ID" value="BAC46772"/>
</dbReference>
<dbReference type="GeneID" id="46488782"/>
<dbReference type="KEGG" id="bja:bsl1507"/>
<dbReference type="PATRIC" id="fig|224911.44.peg.940"/>
<dbReference type="eggNOG" id="COG0254">
    <property type="taxonomic scope" value="Bacteria"/>
</dbReference>
<dbReference type="HOGENOM" id="CLU_114306_3_2_5"/>
<dbReference type="InParanoid" id="Q89UB0"/>
<dbReference type="OrthoDB" id="9803251at2"/>
<dbReference type="PhylomeDB" id="Q89UB0"/>
<dbReference type="Proteomes" id="UP000002526">
    <property type="component" value="Chromosome"/>
</dbReference>
<dbReference type="GO" id="GO:1990904">
    <property type="term" value="C:ribonucleoprotein complex"/>
    <property type="evidence" value="ECO:0007669"/>
    <property type="project" value="UniProtKB-KW"/>
</dbReference>
<dbReference type="GO" id="GO:0005840">
    <property type="term" value="C:ribosome"/>
    <property type="evidence" value="ECO:0007669"/>
    <property type="project" value="UniProtKB-KW"/>
</dbReference>
<dbReference type="GO" id="GO:0019843">
    <property type="term" value="F:rRNA binding"/>
    <property type="evidence" value="ECO:0007669"/>
    <property type="project" value="UniProtKB-KW"/>
</dbReference>
<dbReference type="GO" id="GO:0003735">
    <property type="term" value="F:structural constituent of ribosome"/>
    <property type="evidence" value="ECO:0007669"/>
    <property type="project" value="InterPro"/>
</dbReference>
<dbReference type="GO" id="GO:0006412">
    <property type="term" value="P:translation"/>
    <property type="evidence" value="ECO:0007669"/>
    <property type="project" value="UniProtKB-UniRule"/>
</dbReference>
<dbReference type="Gene3D" id="4.10.830.30">
    <property type="entry name" value="Ribosomal protein L31"/>
    <property type="match status" value="1"/>
</dbReference>
<dbReference type="HAMAP" id="MF_00501">
    <property type="entry name" value="Ribosomal_bL31_1"/>
    <property type="match status" value="1"/>
</dbReference>
<dbReference type="InterPro" id="IPR034704">
    <property type="entry name" value="Ribosomal_bL28/bL31-like_sf"/>
</dbReference>
<dbReference type="InterPro" id="IPR002150">
    <property type="entry name" value="Ribosomal_bL31"/>
</dbReference>
<dbReference type="InterPro" id="IPR027491">
    <property type="entry name" value="Ribosomal_bL31_A"/>
</dbReference>
<dbReference type="InterPro" id="IPR042105">
    <property type="entry name" value="Ribosomal_bL31_sf"/>
</dbReference>
<dbReference type="NCBIfam" id="TIGR00105">
    <property type="entry name" value="L31"/>
    <property type="match status" value="1"/>
</dbReference>
<dbReference type="NCBIfam" id="NF001809">
    <property type="entry name" value="PRK00528.1"/>
    <property type="match status" value="1"/>
</dbReference>
<dbReference type="PANTHER" id="PTHR33280">
    <property type="entry name" value="50S RIBOSOMAL PROTEIN L31, CHLOROPLASTIC"/>
    <property type="match status" value="1"/>
</dbReference>
<dbReference type="PANTHER" id="PTHR33280:SF6">
    <property type="entry name" value="LARGE RIBOSOMAL SUBUNIT PROTEIN BL31A"/>
    <property type="match status" value="1"/>
</dbReference>
<dbReference type="Pfam" id="PF01197">
    <property type="entry name" value="Ribosomal_L31"/>
    <property type="match status" value="1"/>
</dbReference>
<dbReference type="PRINTS" id="PR01249">
    <property type="entry name" value="RIBOSOMALL31"/>
</dbReference>
<dbReference type="SUPFAM" id="SSF143800">
    <property type="entry name" value="L28p-like"/>
    <property type="match status" value="1"/>
</dbReference>
<dbReference type="PROSITE" id="PS01143">
    <property type="entry name" value="RIBOSOMAL_L31"/>
    <property type="match status" value="1"/>
</dbReference>
<comment type="function">
    <text evidence="1">Binds the 23S rRNA.</text>
</comment>
<comment type="subunit">
    <text evidence="1">Part of the 50S ribosomal subunit.</text>
</comment>
<comment type="similarity">
    <text evidence="1">Belongs to the bacterial ribosomal protein bL31 family. Type A subfamily.</text>
</comment>
<name>RL31_BRADU</name>
<reference key="1">
    <citation type="journal article" date="2002" name="DNA Res.">
        <title>Complete genomic sequence of nitrogen-fixing symbiotic bacterium Bradyrhizobium japonicum USDA110.</title>
        <authorList>
            <person name="Kaneko T."/>
            <person name="Nakamura Y."/>
            <person name="Sato S."/>
            <person name="Minamisawa K."/>
            <person name="Uchiumi T."/>
            <person name="Sasamoto S."/>
            <person name="Watanabe A."/>
            <person name="Idesawa K."/>
            <person name="Iriguchi M."/>
            <person name="Kawashima K."/>
            <person name="Kohara M."/>
            <person name="Matsumoto M."/>
            <person name="Shimpo S."/>
            <person name="Tsuruoka H."/>
            <person name="Wada T."/>
            <person name="Yamada M."/>
            <person name="Tabata S."/>
        </authorList>
    </citation>
    <scope>NUCLEOTIDE SEQUENCE [LARGE SCALE GENOMIC DNA]</scope>
    <source>
        <strain>JCM 10833 / BCRC 13528 / IAM 13628 / NBRC 14792 / USDA 110</strain>
    </source>
</reference>
<keyword id="KW-1185">Reference proteome</keyword>
<keyword id="KW-0687">Ribonucleoprotein</keyword>
<keyword id="KW-0689">Ribosomal protein</keyword>
<keyword id="KW-0694">RNA-binding</keyword>
<keyword id="KW-0699">rRNA-binding</keyword>
<organism>
    <name type="scientific">Bradyrhizobium diazoefficiens (strain JCM 10833 / BCRC 13528 / IAM 13628 / NBRC 14792 / USDA 110)</name>
    <dbReference type="NCBI Taxonomy" id="224911"/>
    <lineage>
        <taxon>Bacteria</taxon>
        <taxon>Pseudomonadati</taxon>
        <taxon>Pseudomonadota</taxon>
        <taxon>Alphaproteobacteria</taxon>
        <taxon>Hyphomicrobiales</taxon>
        <taxon>Nitrobacteraceae</taxon>
        <taxon>Bradyrhizobium</taxon>
    </lineage>
</organism>